<proteinExistence type="inferred from homology"/>
<reference key="1">
    <citation type="journal article" date="2003" name="Proc. Natl. Acad. Sci. U.S.A.">
        <title>Reductive genome evolution in Buchnera aphidicola.</title>
        <authorList>
            <person name="van Ham R.C.H.J."/>
            <person name="Kamerbeek J."/>
            <person name="Palacios C."/>
            <person name="Rausell C."/>
            <person name="Abascal F."/>
            <person name="Bastolla U."/>
            <person name="Fernandez J.M."/>
            <person name="Jimenez L."/>
            <person name="Postigo M."/>
            <person name="Silva F.J."/>
            <person name="Tamames J."/>
            <person name="Viguera E."/>
            <person name="Latorre A."/>
            <person name="Valencia A."/>
            <person name="Moran F."/>
            <person name="Moya A."/>
        </authorList>
    </citation>
    <scope>NUCLEOTIDE SEQUENCE [LARGE SCALE GENOMIC DNA]</scope>
    <source>
        <strain>Bp</strain>
    </source>
</reference>
<name>TRUB_BUCBP</name>
<gene>
    <name evidence="1" type="primary">truB</name>
    <name type="ordered locus">bbp_338</name>
</gene>
<sequence length="302" mass="34502">MYSEFRSIDGIILIDKPYGLSSHETLQKVKGILKIKKMGHTGTLDPLATGMLPMCCGRATKFSQFLMNFKKRYRVIAKLGQKTSTSDSEGQIIHVRPITFTNLQLQKVLKSFHGKIKQIPSMYSAIKYHGHALYKYARQGIVISRKVRDAIIYELKVLGYSYKHKYLELDIICSKGTYIRTLIEDVGEKLNCGAHVISLRRLQVGNYTSFQMIDIKTLNKLVKYNINVLEHILLSVDNAISCFPEVNIVPNVIKNLQNGQKVKTHSGFINQFVRITEGINRRFIGIGKINNINELYSYRLII</sequence>
<organism>
    <name type="scientific">Buchnera aphidicola subsp. Baizongia pistaciae (strain Bp)</name>
    <dbReference type="NCBI Taxonomy" id="224915"/>
    <lineage>
        <taxon>Bacteria</taxon>
        <taxon>Pseudomonadati</taxon>
        <taxon>Pseudomonadota</taxon>
        <taxon>Gammaproteobacteria</taxon>
        <taxon>Enterobacterales</taxon>
        <taxon>Erwiniaceae</taxon>
        <taxon>Buchnera</taxon>
    </lineage>
</organism>
<keyword id="KW-0413">Isomerase</keyword>
<keyword id="KW-1185">Reference proteome</keyword>
<keyword id="KW-0819">tRNA processing</keyword>
<comment type="function">
    <text evidence="1">Responsible for synthesis of pseudouridine from uracil-55 in the psi GC loop of transfer RNAs.</text>
</comment>
<comment type="catalytic activity">
    <reaction evidence="1">
        <text>uridine(55) in tRNA = pseudouridine(55) in tRNA</text>
        <dbReference type="Rhea" id="RHEA:42532"/>
        <dbReference type="Rhea" id="RHEA-COMP:10101"/>
        <dbReference type="Rhea" id="RHEA-COMP:10102"/>
        <dbReference type="ChEBI" id="CHEBI:65314"/>
        <dbReference type="ChEBI" id="CHEBI:65315"/>
        <dbReference type="EC" id="5.4.99.25"/>
    </reaction>
</comment>
<comment type="similarity">
    <text evidence="1">Belongs to the pseudouridine synthase TruB family. Type 1 subfamily.</text>
</comment>
<dbReference type="EC" id="5.4.99.25" evidence="1"/>
<dbReference type="EMBL" id="AE016826">
    <property type="protein sequence ID" value="AAO27059.1"/>
    <property type="molecule type" value="Genomic_DNA"/>
</dbReference>
<dbReference type="RefSeq" id="WP_011091460.1">
    <property type="nucleotide sequence ID" value="NC_004545.1"/>
</dbReference>
<dbReference type="SMR" id="Q89AF6"/>
<dbReference type="STRING" id="224915.bbp_338"/>
<dbReference type="KEGG" id="bab:bbp_338"/>
<dbReference type="eggNOG" id="COG0130">
    <property type="taxonomic scope" value="Bacteria"/>
</dbReference>
<dbReference type="HOGENOM" id="CLU_032087_0_3_6"/>
<dbReference type="OrthoDB" id="9802309at2"/>
<dbReference type="Proteomes" id="UP000000601">
    <property type="component" value="Chromosome"/>
</dbReference>
<dbReference type="GO" id="GO:0003723">
    <property type="term" value="F:RNA binding"/>
    <property type="evidence" value="ECO:0007669"/>
    <property type="project" value="InterPro"/>
</dbReference>
<dbReference type="GO" id="GO:0160148">
    <property type="term" value="F:tRNA pseudouridine(55) synthase activity"/>
    <property type="evidence" value="ECO:0007669"/>
    <property type="project" value="UniProtKB-EC"/>
</dbReference>
<dbReference type="GO" id="GO:1990481">
    <property type="term" value="P:mRNA pseudouridine synthesis"/>
    <property type="evidence" value="ECO:0007669"/>
    <property type="project" value="TreeGrafter"/>
</dbReference>
<dbReference type="GO" id="GO:0031119">
    <property type="term" value="P:tRNA pseudouridine synthesis"/>
    <property type="evidence" value="ECO:0007669"/>
    <property type="project" value="UniProtKB-UniRule"/>
</dbReference>
<dbReference type="CDD" id="cd02573">
    <property type="entry name" value="PseudoU_synth_EcTruB"/>
    <property type="match status" value="1"/>
</dbReference>
<dbReference type="CDD" id="cd21152">
    <property type="entry name" value="PUA_TruB_bacterial"/>
    <property type="match status" value="1"/>
</dbReference>
<dbReference type="Gene3D" id="3.30.2350.10">
    <property type="entry name" value="Pseudouridine synthase"/>
    <property type="match status" value="1"/>
</dbReference>
<dbReference type="Gene3D" id="2.30.130.10">
    <property type="entry name" value="PUA domain"/>
    <property type="match status" value="1"/>
</dbReference>
<dbReference type="HAMAP" id="MF_01080">
    <property type="entry name" value="TruB_bact"/>
    <property type="match status" value="1"/>
</dbReference>
<dbReference type="InterPro" id="IPR020103">
    <property type="entry name" value="PsdUridine_synth_cat_dom_sf"/>
</dbReference>
<dbReference type="InterPro" id="IPR002501">
    <property type="entry name" value="PsdUridine_synth_N"/>
</dbReference>
<dbReference type="InterPro" id="IPR015947">
    <property type="entry name" value="PUA-like_sf"/>
</dbReference>
<dbReference type="InterPro" id="IPR036974">
    <property type="entry name" value="PUA_sf"/>
</dbReference>
<dbReference type="InterPro" id="IPR014780">
    <property type="entry name" value="tRNA_psdUridine_synth_TruB"/>
</dbReference>
<dbReference type="InterPro" id="IPR015240">
    <property type="entry name" value="tRNA_sdUridine_synth_fam1_C"/>
</dbReference>
<dbReference type="InterPro" id="IPR032819">
    <property type="entry name" value="TruB_C"/>
</dbReference>
<dbReference type="NCBIfam" id="TIGR00431">
    <property type="entry name" value="TruB"/>
    <property type="match status" value="1"/>
</dbReference>
<dbReference type="PANTHER" id="PTHR13767:SF2">
    <property type="entry name" value="PSEUDOURIDYLATE SYNTHASE TRUB1"/>
    <property type="match status" value="1"/>
</dbReference>
<dbReference type="PANTHER" id="PTHR13767">
    <property type="entry name" value="TRNA-PSEUDOURIDINE SYNTHASE"/>
    <property type="match status" value="1"/>
</dbReference>
<dbReference type="Pfam" id="PF09157">
    <property type="entry name" value="TruB-C_2"/>
    <property type="match status" value="1"/>
</dbReference>
<dbReference type="Pfam" id="PF16198">
    <property type="entry name" value="TruB_C_2"/>
    <property type="match status" value="1"/>
</dbReference>
<dbReference type="Pfam" id="PF01509">
    <property type="entry name" value="TruB_N"/>
    <property type="match status" value="1"/>
</dbReference>
<dbReference type="SUPFAM" id="SSF55120">
    <property type="entry name" value="Pseudouridine synthase"/>
    <property type="match status" value="1"/>
</dbReference>
<dbReference type="SUPFAM" id="SSF88697">
    <property type="entry name" value="PUA domain-like"/>
    <property type="match status" value="1"/>
</dbReference>
<accession>Q89AF6</accession>
<evidence type="ECO:0000255" key="1">
    <source>
        <dbReference type="HAMAP-Rule" id="MF_01080"/>
    </source>
</evidence>
<protein>
    <recommendedName>
        <fullName evidence="1">tRNA pseudouridine synthase B</fullName>
        <ecNumber evidence="1">5.4.99.25</ecNumber>
    </recommendedName>
    <alternativeName>
        <fullName evidence="1">tRNA pseudouridine(55) synthase</fullName>
        <shortName evidence="1">Psi55 synthase</shortName>
    </alternativeName>
    <alternativeName>
        <fullName evidence="1">tRNA pseudouridylate synthase</fullName>
    </alternativeName>
    <alternativeName>
        <fullName evidence="1">tRNA-uridine isomerase</fullName>
    </alternativeName>
</protein>
<feature type="chain" id="PRO_0000121808" description="tRNA pseudouridine synthase B">
    <location>
        <begin position="1"/>
        <end position="302"/>
    </location>
</feature>
<feature type="active site" description="Nucleophile" evidence="1">
    <location>
        <position position="45"/>
    </location>
</feature>
<feature type="binding site" evidence="1">
    <location>
        <position position="40"/>
    </location>
    <ligand>
        <name>substrate</name>
    </ligand>
</feature>
<feature type="binding site" evidence="1">
    <location>
        <position position="73"/>
    </location>
    <ligand>
        <name>substrate</name>
    </ligand>
</feature>
<feature type="binding site" evidence="1">
    <location>
        <position position="178"/>
    </location>
    <ligand>
        <name>substrate</name>
    </ligand>
</feature>
<feature type="binding site" evidence="1">
    <location>
        <position position="199"/>
    </location>
    <ligand>
        <name>substrate</name>
    </ligand>
</feature>